<feature type="chain" id="PRO_0000141594" description="Glutaredoxin">
    <location>
        <begin position="1"/>
        <end position="84"/>
    </location>
</feature>
<feature type="domain" description="Glutaredoxin" evidence="2">
    <location>
        <begin position="1"/>
        <end position="84"/>
    </location>
</feature>
<feature type="disulfide bond" description="Redox-active" evidence="1">
    <location>
        <begin position="12"/>
        <end position="15"/>
    </location>
</feature>
<proteinExistence type="inferred from homology"/>
<evidence type="ECO:0000250" key="1"/>
<evidence type="ECO:0000255" key="2">
    <source>
        <dbReference type="PROSITE-ProRule" id="PRU00686"/>
    </source>
</evidence>
<evidence type="ECO:0000305" key="3"/>
<gene>
    <name type="primary">grx</name>
    <name type="ordered locus">PA5129</name>
</gene>
<organism>
    <name type="scientific">Pseudomonas aeruginosa (strain ATCC 15692 / DSM 22644 / CIP 104116 / JCM 14847 / LMG 12228 / 1C / PRS 101 / PAO1)</name>
    <dbReference type="NCBI Taxonomy" id="208964"/>
    <lineage>
        <taxon>Bacteria</taxon>
        <taxon>Pseudomonadati</taxon>
        <taxon>Pseudomonadota</taxon>
        <taxon>Gammaproteobacteria</taxon>
        <taxon>Pseudomonadales</taxon>
        <taxon>Pseudomonadaceae</taxon>
        <taxon>Pseudomonas</taxon>
    </lineage>
</organism>
<comment type="function">
    <text evidence="1">Has a glutathione-disulfide oxidoreductase activity in the presence of NADPH and glutathione reductase. Reduces low molecular weight disulfides and proteins (By similarity).</text>
</comment>
<comment type="subunit">
    <text evidence="1">Monomer.</text>
</comment>
<comment type="subcellular location">
    <subcellularLocation>
        <location evidence="1">Cytoplasm</location>
    </subcellularLocation>
</comment>
<comment type="similarity">
    <text evidence="3">Belongs to the glutaredoxin family.</text>
</comment>
<name>GLRX_PSEAE</name>
<dbReference type="EMBL" id="AE004091">
    <property type="protein sequence ID" value="AAG08514.1"/>
    <property type="molecule type" value="Genomic_DNA"/>
</dbReference>
<dbReference type="PIR" id="E83004">
    <property type="entry name" value="E83004"/>
</dbReference>
<dbReference type="RefSeq" id="NP_253816.1">
    <property type="nucleotide sequence ID" value="NC_002516.2"/>
</dbReference>
<dbReference type="SMR" id="Q9HU55"/>
<dbReference type="FunCoup" id="Q9HU55">
    <property type="interactions" value="458"/>
</dbReference>
<dbReference type="STRING" id="208964.PA5129"/>
<dbReference type="PaxDb" id="208964-PA5129"/>
<dbReference type="DNASU" id="877828"/>
<dbReference type="GeneID" id="877828"/>
<dbReference type="KEGG" id="pae:PA5129"/>
<dbReference type="PATRIC" id="fig|208964.12.peg.5375"/>
<dbReference type="PseudoCAP" id="PA5129"/>
<dbReference type="HOGENOM" id="CLU_026126_7_3_6"/>
<dbReference type="InParanoid" id="Q9HU55"/>
<dbReference type="OrthoDB" id="9814618at2"/>
<dbReference type="PhylomeDB" id="Q9HU55"/>
<dbReference type="BioCyc" id="PAER208964:G1FZ6-5244-MONOMER"/>
<dbReference type="Proteomes" id="UP000002438">
    <property type="component" value="Chromosome"/>
</dbReference>
<dbReference type="GO" id="GO:0005737">
    <property type="term" value="C:cytoplasm"/>
    <property type="evidence" value="ECO:0000318"/>
    <property type="project" value="GO_Central"/>
</dbReference>
<dbReference type="GO" id="GO:0015038">
    <property type="term" value="F:glutathione disulfide oxidoreductase activity"/>
    <property type="evidence" value="ECO:0000318"/>
    <property type="project" value="GO_Central"/>
</dbReference>
<dbReference type="GO" id="GO:0045454">
    <property type="term" value="P:cell redox homeostasis"/>
    <property type="evidence" value="ECO:0007669"/>
    <property type="project" value="InterPro"/>
</dbReference>
<dbReference type="GO" id="GO:0034599">
    <property type="term" value="P:cellular response to oxidative stress"/>
    <property type="evidence" value="ECO:0000318"/>
    <property type="project" value="GO_Central"/>
</dbReference>
<dbReference type="CDD" id="cd03418">
    <property type="entry name" value="GRX_GRXb_1_3_like"/>
    <property type="match status" value="1"/>
</dbReference>
<dbReference type="FunFam" id="3.40.30.10:FF:000018">
    <property type="entry name" value="Glutaredoxin"/>
    <property type="match status" value="1"/>
</dbReference>
<dbReference type="Gene3D" id="3.40.30.10">
    <property type="entry name" value="Glutaredoxin"/>
    <property type="match status" value="1"/>
</dbReference>
<dbReference type="InterPro" id="IPR011767">
    <property type="entry name" value="GLR_AS"/>
</dbReference>
<dbReference type="InterPro" id="IPR002109">
    <property type="entry name" value="Glutaredoxin"/>
</dbReference>
<dbReference type="InterPro" id="IPR014025">
    <property type="entry name" value="Glutaredoxin_subgr"/>
</dbReference>
<dbReference type="InterPro" id="IPR011900">
    <property type="entry name" value="GRX_bact"/>
</dbReference>
<dbReference type="InterPro" id="IPR036249">
    <property type="entry name" value="Thioredoxin-like_sf"/>
</dbReference>
<dbReference type="NCBIfam" id="TIGR02181">
    <property type="entry name" value="GRX_bact"/>
    <property type="match status" value="1"/>
</dbReference>
<dbReference type="PANTHER" id="PTHR45694">
    <property type="entry name" value="GLUTAREDOXIN 2"/>
    <property type="match status" value="1"/>
</dbReference>
<dbReference type="PANTHER" id="PTHR45694:SF18">
    <property type="entry name" value="GLUTAREDOXIN-1-RELATED"/>
    <property type="match status" value="1"/>
</dbReference>
<dbReference type="Pfam" id="PF00462">
    <property type="entry name" value="Glutaredoxin"/>
    <property type="match status" value="1"/>
</dbReference>
<dbReference type="PRINTS" id="PR00160">
    <property type="entry name" value="GLUTAREDOXIN"/>
</dbReference>
<dbReference type="SUPFAM" id="SSF52833">
    <property type="entry name" value="Thioredoxin-like"/>
    <property type="match status" value="1"/>
</dbReference>
<dbReference type="PROSITE" id="PS00195">
    <property type="entry name" value="GLUTAREDOXIN_1"/>
    <property type="match status" value="1"/>
</dbReference>
<dbReference type="PROSITE" id="PS51354">
    <property type="entry name" value="GLUTAREDOXIN_2"/>
    <property type="match status" value="1"/>
</dbReference>
<reference key="1">
    <citation type="journal article" date="2000" name="Nature">
        <title>Complete genome sequence of Pseudomonas aeruginosa PAO1, an opportunistic pathogen.</title>
        <authorList>
            <person name="Stover C.K."/>
            <person name="Pham X.-Q.T."/>
            <person name="Erwin A.L."/>
            <person name="Mizoguchi S.D."/>
            <person name="Warrener P."/>
            <person name="Hickey M.J."/>
            <person name="Brinkman F.S.L."/>
            <person name="Hufnagle W.O."/>
            <person name="Kowalik D.J."/>
            <person name="Lagrou M."/>
            <person name="Garber R.L."/>
            <person name="Goltry L."/>
            <person name="Tolentino E."/>
            <person name="Westbrock-Wadman S."/>
            <person name="Yuan Y."/>
            <person name="Brody L.L."/>
            <person name="Coulter S.N."/>
            <person name="Folger K.R."/>
            <person name="Kas A."/>
            <person name="Larbig K."/>
            <person name="Lim R.M."/>
            <person name="Smith K.A."/>
            <person name="Spencer D.H."/>
            <person name="Wong G.K.-S."/>
            <person name="Wu Z."/>
            <person name="Paulsen I.T."/>
            <person name="Reizer J."/>
            <person name="Saier M.H. Jr."/>
            <person name="Hancock R.E.W."/>
            <person name="Lory S."/>
            <person name="Olson M.V."/>
        </authorList>
    </citation>
    <scope>NUCLEOTIDE SEQUENCE [LARGE SCALE GENOMIC DNA]</scope>
    <source>
        <strain>ATCC 15692 / DSM 22644 / CIP 104116 / JCM 14847 / LMG 12228 / 1C / PRS 101 / PAO1</strain>
    </source>
</reference>
<keyword id="KW-0963">Cytoplasm</keyword>
<keyword id="KW-1015">Disulfide bond</keyword>
<keyword id="KW-0249">Electron transport</keyword>
<keyword id="KW-0676">Redox-active center</keyword>
<keyword id="KW-1185">Reference proteome</keyword>
<keyword id="KW-0813">Transport</keyword>
<protein>
    <recommendedName>
        <fullName>Glutaredoxin</fullName>
    </recommendedName>
</protein>
<accession>Q9HU55</accession>
<sequence>MPPVVIYTTAWCPYCIRAKQLLQRKGVDFQEIACDGKPELRAELARKAGSTTVPQIWIGETHVGGCDDLHALERAGKLDALLSA</sequence>